<proteinExistence type="inferred from homology"/>
<dbReference type="EC" id="2.5.1.55" evidence="1"/>
<dbReference type="EMBL" id="AL157959">
    <property type="protein sequence ID" value="CAM08645.1"/>
    <property type="molecule type" value="Genomic_DNA"/>
</dbReference>
<dbReference type="PIR" id="G81840">
    <property type="entry name" value="G81840"/>
</dbReference>
<dbReference type="RefSeq" id="WP_002232563.1">
    <property type="nucleotide sequence ID" value="NC_003116.1"/>
</dbReference>
<dbReference type="SMR" id="Q9JU48"/>
<dbReference type="EnsemblBacteria" id="CAM08645">
    <property type="protein sequence ID" value="CAM08645"/>
    <property type="gene ID" value="NMA1493"/>
</dbReference>
<dbReference type="GeneID" id="93385915"/>
<dbReference type="KEGG" id="nma:NMA1493"/>
<dbReference type="HOGENOM" id="CLU_036666_0_0_4"/>
<dbReference type="UniPathway" id="UPA00030"/>
<dbReference type="UniPathway" id="UPA00357">
    <property type="reaction ID" value="UER00474"/>
</dbReference>
<dbReference type="Proteomes" id="UP000000626">
    <property type="component" value="Chromosome"/>
</dbReference>
<dbReference type="GO" id="GO:0005737">
    <property type="term" value="C:cytoplasm"/>
    <property type="evidence" value="ECO:0007669"/>
    <property type="project" value="UniProtKB-SubCell"/>
</dbReference>
<dbReference type="GO" id="GO:0008676">
    <property type="term" value="F:3-deoxy-8-phosphooctulonate synthase activity"/>
    <property type="evidence" value="ECO:0007669"/>
    <property type="project" value="UniProtKB-UniRule"/>
</dbReference>
<dbReference type="GO" id="GO:0019294">
    <property type="term" value="P:keto-3-deoxy-D-manno-octulosonic acid biosynthetic process"/>
    <property type="evidence" value="ECO:0007669"/>
    <property type="project" value="UniProtKB-UniRule"/>
</dbReference>
<dbReference type="Gene3D" id="3.20.20.70">
    <property type="entry name" value="Aldolase class I"/>
    <property type="match status" value="1"/>
</dbReference>
<dbReference type="HAMAP" id="MF_00056">
    <property type="entry name" value="KDO8P_synth"/>
    <property type="match status" value="1"/>
</dbReference>
<dbReference type="InterPro" id="IPR013785">
    <property type="entry name" value="Aldolase_TIM"/>
</dbReference>
<dbReference type="InterPro" id="IPR006218">
    <property type="entry name" value="DAHP1/KDSA"/>
</dbReference>
<dbReference type="InterPro" id="IPR006269">
    <property type="entry name" value="KDO8P_synthase"/>
</dbReference>
<dbReference type="NCBIfam" id="TIGR01362">
    <property type="entry name" value="KDO8P_synth"/>
    <property type="match status" value="1"/>
</dbReference>
<dbReference type="NCBIfam" id="NF003543">
    <property type="entry name" value="PRK05198.1"/>
    <property type="match status" value="1"/>
</dbReference>
<dbReference type="NCBIfam" id="NF009109">
    <property type="entry name" value="PRK12457.1"/>
    <property type="match status" value="1"/>
</dbReference>
<dbReference type="PANTHER" id="PTHR21057">
    <property type="entry name" value="PHOSPHO-2-DEHYDRO-3-DEOXYHEPTONATE ALDOLASE"/>
    <property type="match status" value="1"/>
</dbReference>
<dbReference type="Pfam" id="PF00793">
    <property type="entry name" value="DAHP_synth_1"/>
    <property type="match status" value="1"/>
</dbReference>
<dbReference type="SUPFAM" id="SSF51569">
    <property type="entry name" value="Aldolase"/>
    <property type="match status" value="1"/>
</dbReference>
<reference key="1">
    <citation type="journal article" date="2000" name="Nature">
        <title>Complete DNA sequence of a serogroup A strain of Neisseria meningitidis Z2491.</title>
        <authorList>
            <person name="Parkhill J."/>
            <person name="Achtman M."/>
            <person name="James K.D."/>
            <person name="Bentley S.D."/>
            <person name="Churcher C.M."/>
            <person name="Klee S.R."/>
            <person name="Morelli G."/>
            <person name="Basham D."/>
            <person name="Brown D."/>
            <person name="Chillingworth T."/>
            <person name="Davies R.M."/>
            <person name="Davis P."/>
            <person name="Devlin K."/>
            <person name="Feltwell T."/>
            <person name="Hamlin N."/>
            <person name="Holroyd S."/>
            <person name="Jagels K."/>
            <person name="Leather S."/>
            <person name="Moule S."/>
            <person name="Mungall K.L."/>
            <person name="Quail M.A."/>
            <person name="Rajandream M.A."/>
            <person name="Rutherford K.M."/>
            <person name="Simmonds M."/>
            <person name="Skelton J."/>
            <person name="Whitehead S."/>
            <person name="Spratt B.G."/>
            <person name="Barrell B.G."/>
        </authorList>
    </citation>
    <scope>NUCLEOTIDE SEQUENCE [LARGE SCALE GENOMIC DNA]</scope>
    <source>
        <strain>DSM 15465 / Z2491</strain>
    </source>
</reference>
<accession>Q9JU48</accession>
<accession>A1IS90</accession>
<feature type="chain" id="PRO_0000187142" description="2-dehydro-3-deoxyphosphooctonate aldolase">
    <location>
        <begin position="1"/>
        <end position="280"/>
    </location>
</feature>
<gene>
    <name evidence="1" type="primary">kdsA</name>
    <name type="ordered locus">NMA1493</name>
</gene>
<comment type="catalytic activity">
    <reaction evidence="1">
        <text>D-arabinose 5-phosphate + phosphoenolpyruvate + H2O = 3-deoxy-alpha-D-manno-2-octulosonate-8-phosphate + phosphate</text>
        <dbReference type="Rhea" id="RHEA:14053"/>
        <dbReference type="ChEBI" id="CHEBI:15377"/>
        <dbReference type="ChEBI" id="CHEBI:43474"/>
        <dbReference type="ChEBI" id="CHEBI:57693"/>
        <dbReference type="ChEBI" id="CHEBI:58702"/>
        <dbReference type="ChEBI" id="CHEBI:85985"/>
        <dbReference type="EC" id="2.5.1.55"/>
    </reaction>
</comment>
<comment type="pathway">
    <text evidence="1">Carbohydrate biosynthesis; 3-deoxy-D-manno-octulosonate biosynthesis; 3-deoxy-D-manno-octulosonate from D-ribulose 5-phosphate: step 2/3.</text>
</comment>
<comment type="pathway">
    <text evidence="1">Bacterial outer membrane biogenesis; lipopolysaccharide biosynthesis.</text>
</comment>
<comment type="subcellular location">
    <subcellularLocation>
        <location evidence="1">Cytoplasm</location>
    </subcellularLocation>
</comment>
<comment type="similarity">
    <text evidence="1">Belongs to the KdsA family.</text>
</comment>
<keyword id="KW-0963">Cytoplasm</keyword>
<keyword id="KW-0448">Lipopolysaccharide biosynthesis</keyword>
<keyword id="KW-0808">Transferase</keyword>
<sequence>MDIKINDITLGNNLPFVLFGGINVLESLDSTLQTCAHYVEVTRKLGIPYIFKASFDKANRSSIHSYRGVGLEEGLKIFEKVKAEFGIPVITDVHEPHQCQPVAEVCDVIQLPAFLARQTDLVAAMAETGNVINIKKPQFLSPSQMKNIVEKFHEADNGKLILCERGSSFGYDNLVVDILGFGVMKQTCGNLPVIFDVTHSLQTRDAGSAASGGRRAQALDLALAGMATRLAGLFLESHPDPKLAKCDGPSALPLHLLEDFLIRIKALDDLIKSQPILTIE</sequence>
<name>KDSA_NEIMA</name>
<protein>
    <recommendedName>
        <fullName evidence="1">2-dehydro-3-deoxyphosphooctonate aldolase</fullName>
        <ecNumber evidence="1">2.5.1.55</ecNumber>
    </recommendedName>
    <alternativeName>
        <fullName evidence="1">3-deoxy-D-manno-octulosonic acid 8-phosphate synthase</fullName>
    </alternativeName>
    <alternativeName>
        <fullName evidence="1">KDO-8-phosphate synthase</fullName>
        <shortName evidence="1">KDO 8-P synthase</shortName>
        <shortName evidence="1">KDOPS</shortName>
    </alternativeName>
    <alternativeName>
        <fullName evidence="1">Phospho-2-dehydro-3-deoxyoctonate aldolase</fullName>
    </alternativeName>
</protein>
<evidence type="ECO:0000255" key="1">
    <source>
        <dbReference type="HAMAP-Rule" id="MF_00056"/>
    </source>
</evidence>
<organism>
    <name type="scientific">Neisseria meningitidis serogroup A / serotype 4A (strain DSM 15465 / Z2491)</name>
    <dbReference type="NCBI Taxonomy" id="122587"/>
    <lineage>
        <taxon>Bacteria</taxon>
        <taxon>Pseudomonadati</taxon>
        <taxon>Pseudomonadota</taxon>
        <taxon>Betaproteobacteria</taxon>
        <taxon>Neisseriales</taxon>
        <taxon>Neisseriaceae</taxon>
        <taxon>Neisseria</taxon>
    </lineage>
</organism>